<protein>
    <recommendedName>
        <fullName evidence="1">Large ribosomal subunit protein bL36</fullName>
    </recommendedName>
    <alternativeName>
        <fullName evidence="2">50S ribosomal protein L36</fullName>
    </alternativeName>
</protein>
<organism>
    <name type="scientific">Shewanella frigidimarina (strain NCIMB 400)</name>
    <dbReference type="NCBI Taxonomy" id="318167"/>
    <lineage>
        <taxon>Bacteria</taxon>
        <taxon>Pseudomonadati</taxon>
        <taxon>Pseudomonadota</taxon>
        <taxon>Gammaproteobacteria</taxon>
        <taxon>Alteromonadales</taxon>
        <taxon>Shewanellaceae</taxon>
        <taxon>Shewanella</taxon>
    </lineage>
</organism>
<name>RL36_SHEFN</name>
<comment type="similarity">
    <text evidence="1">Belongs to the bacterial ribosomal protein bL36 family.</text>
</comment>
<dbReference type="EMBL" id="CP000447">
    <property type="protein sequence ID" value="ABI70032.1"/>
    <property type="molecule type" value="Genomic_DNA"/>
</dbReference>
<dbReference type="SMR" id="Q089N3"/>
<dbReference type="STRING" id="318167.Sfri_0169"/>
<dbReference type="KEGG" id="sfr:Sfri_0169"/>
<dbReference type="eggNOG" id="COG0257">
    <property type="taxonomic scope" value="Bacteria"/>
</dbReference>
<dbReference type="HOGENOM" id="CLU_135723_6_2_6"/>
<dbReference type="OrthoDB" id="9802520at2"/>
<dbReference type="Proteomes" id="UP000000684">
    <property type="component" value="Chromosome"/>
</dbReference>
<dbReference type="GO" id="GO:0005737">
    <property type="term" value="C:cytoplasm"/>
    <property type="evidence" value="ECO:0007669"/>
    <property type="project" value="UniProtKB-ARBA"/>
</dbReference>
<dbReference type="GO" id="GO:1990904">
    <property type="term" value="C:ribonucleoprotein complex"/>
    <property type="evidence" value="ECO:0007669"/>
    <property type="project" value="UniProtKB-KW"/>
</dbReference>
<dbReference type="GO" id="GO:0005840">
    <property type="term" value="C:ribosome"/>
    <property type="evidence" value="ECO:0007669"/>
    <property type="project" value="UniProtKB-KW"/>
</dbReference>
<dbReference type="GO" id="GO:0003735">
    <property type="term" value="F:structural constituent of ribosome"/>
    <property type="evidence" value="ECO:0007669"/>
    <property type="project" value="InterPro"/>
</dbReference>
<dbReference type="GO" id="GO:0006412">
    <property type="term" value="P:translation"/>
    <property type="evidence" value="ECO:0007669"/>
    <property type="project" value="UniProtKB-UniRule"/>
</dbReference>
<dbReference type="HAMAP" id="MF_00251">
    <property type="entry name" value="Ribosomal_bL36"/>
    <property type="match status" value="1"/>
</dbReference>
<dbReference type="InterPro" id="IPR000473">
    <property type="entry name" value="Ribosomal_bL36"/>
</dbReference>
<dbReference type="InterPro" id="IPR035977">
    <property type="entry name" value="Ribosomal_bL36_sp"/>
</dbReference>
<dbReference type="NCBIfam" id="TIGR01022">
    <property type="entry name" value="rpmJ_bact"/>
    <property type="match status" value="1"/>
</dbReference>
<dbReference type="PANTHER" id="PTHR42888">
    <property type="entry name" value="50S RIBOSOMAL PROTEIN L36, CHLOROPLASTIC"/>
    <property type="match status" value="1"/>
</dbReference>
<dbReference type="PANTHER" id="PTHR42888:SF1">
    <property type="entry name" value="LARGE RIBOSOMAL SUBUNIT PROTEIN BL36C"/>
    <property type="match status" value="1"/>
</dbReference>
<dbReference type="Pfam" id="PF00444">
    <property type="entry name" value="Ribosomal_L36"/>
    <property type="match status" value="1"/>
</dbReference>
<dbReference type="SUPFAM" id="SSF57840">
    <property type="entry name" value="Ribosomal protein L36"/>
    <property type="match status" value="1"/>
</dbReference>
<dbReference type="PROSITE" id="PS00828">
    <property type="entry name" value="RIBOSOMAL_L36"/>
    <property type="match status" value="1"/>
</dbReference>
<reference key="1">
    <citation type="submission" date="2006-08" db="EMBL/GenBank/DDBJ databases">
        <title>Complete sequence of Shewanella frigidimarina NCIMB 400.</title>
        <authorList>
            <consortium name="US DOE Joint Genome Institute"/>
            <person name="Copeland A."/>
            <person name="Lucas S."/>
            <person name="Lapidus A."/>
            <person name="Barry K."/>
            <person name="Detter J.C."/>
            <person name="Glavina del Rio T."/>
            <person name="Hammon N."/>
            <person name="Israni S."/>
            <person name="Dalin E."/>
            <person name="Tice H."/>
            <person name="Pitluck S."/>
            <person name="Fredrickson J.K."/>
            <person name="Kolker E."/>
            <person name="McCuel L.A."/>
            <person name="DiChristina T."/>
            <person name="Nealson K.H."/>
            <person name="Newman D."/>
            <person name="Tiedje J.M."/>
            <person name="Zhou J."/>
            <person name="Romine M.F."/>
            <person name="Culley D.E."/>
            <person name="Serres M."/>
            <person name="Chertkov O."/>
            <person name="Brettin T."/>
            <person name="Bruce D."/>
            <person name="Han C."/>
            <person name="Tapia R."/>
            <person name="Gilna P."/>
            <person name="Schmutz J."/>
            <person name="Larimer F."/>
            <person name="Land M."/>
            <person name="Hauser L."/>
            <person name="Kyrpides N."/>
            <person name="Mikhailova N."/>
            <person name="Richardson P."/>
        </authorList>
    </citation>
    <scope>NUCLEOTIDE SEQUENCE [LARGE SCALE GENOMIC DNA]</scope>
    <source>
        <strain>NCIMB 400</strain>
    </source>
</reference>
<sequence length="37" mass="4277">MKVRASVKKICRNCKIVKRSGVVRVICIEPKHKQRQG</sequence>
<feature type="chain" id="PRO_0000302290" description="Large ribosomal subunit protein bL36">
    <location>
        <begin position="1"/>
        <end position="37"/>
    </location>
</feature>
<gene>
    <name evidence="1" type="primary">rpmJ</name>
    <name type="ordered locus">Sfri_0169</name>
</gene>
<proteinExistence type="inferred from homology"/>
<accession>Q089N3</accession>
<evidence type="ECO:0000255" key="1">
    <source>
        <dbReference type="HAMAP-Rule" id="MF_00251"/>
    </source>
</evidence>
<evidence type="ECO:0000305" key="2"/>
<keyword id="KW-1185">Reference proteome</keyword>
<keyword id="KW-0687">Ribonucleoprotein</keyword>
<keyword id="KW-0689">Ribosomal protein</keyword>